<accession>P59648</accession>
<accession>Q8BTD2</accession>
<name>FXYD7_MOUSE</name>
<evidence type="ECO:0000250" key="1">
    <source>
        <dbReference type="UniProtKB" id="P58549"/>
    </source>
</evidence>
<evidence type="ECO:0000250" key="2">
    <source>
        <dbReference type="UniProtKB" id="P59649"/>
    </source>
</evidence>
<evidence type="ECO:0000255" key="3"/>
<evidence type="ECO:0000256" key="4">
    <source>
        <dbReference type="SAM" id="MobiDB-lite"/>
    </source>
</evidence>
<evidence type="ECO:0000269" key="5">
    <source>
    </source>
</evidence>
<evidence type="ECO:0000269" key="6">
    <source>
    </source>
</evidence>
<evidence type="ECO:0000269" key="7">
    <source>
    </source>
</evidence>
<evidence type="ECO:0000305" key="8"/>
<evidence type="ECO:0000305" key="9">
    <source>
    </source>
</evidence>
<evidence type="ECO:0000305" key="10">
    <source>
    </source>
</evidence>
<comment type="function">
    <text evidence="1 5 6 7">Associates with and regulates the activity of the sodium/potassium-transporting ATPase (NKA) which catalyzes the hydrolysis of ATP coupled with the exchange of Na(+) and K(+) ions across the plasma membrane (PubMed:12093728, PubMed:15133029, PubMed:16269407). Reduces the apparent affinity for external K(+), an effect that depends on the presence of external Na(+) and voltage (PubMed:12093728, PubMed:15133029). Increases the apparent affinity for intracellular Na(+) (By similarity).</text>
</comment>
<comment type="subunit">
    <text evidence="5 6 7">Regulatory subunit of the sodium/potassium-transporting ATPase which is composed of a catalytic alpha subunit, a non-catalytic beta subunit and an additional regulatory subunit (PubMed:15133029). The regulatory subunit, a member of the FXYD protein family, modulates the enzymatic activity in a tissue- and isoform-specific way by changing affinities of the Na+/K+-ATPase toward Na(+), K(+) or ATP (PubMed:12093728, PubMed:15133029, PubMed:16269407).</text>
</comment>
<comment type="subcellular location">
    <subcellularLocation>
        <location evidence="5 6">Cell membrane</location>
        <topology evidence="5">Single-pass type I membrane protein</topology>
    </subcellularLocation>
    <text evidence="2">Able to translocate to the plasma membrane of Xenopus oocytes independent of its association with NKA.</text>
</comment>
<comment type="domain">
    <text evidence="7">The transmembrane domain is important for the interaction with NKA and with the functional effect of FXYD7.</text>
</comment>
<comment type="PTM">
    <text evidence="5 6">O-glycosylated; required for stabilization and translocation to the plasma membrane.</text>
</comment>
<comment type="similarity">
    <text evidence="8">Belongs to the FXYD family.</text>
</comment>
<sequence length="80" mass="8487">MATPTQSPTNVPEETDPFFYDYATVQTVGMTLATIMFVLGIIIILSKKVKCRKADSRSESPTCKSCKSELPSSAPGGGGV</sequence>
<feature type="chain" id="PRO_0000148191" description="FXYD domain-containing ion transport regulator 7">
    <location>
        <begin position="1"/>
        <end position="80"/>
    </location>
</feature>
<feature type="topological domain" description="Extracellular" evidence="5">
    <location>
        <begin position="1"/>
        <end position="22"/>
    </location>
</feature>
<feature type="transmembrane region" description="Helical" evidence="3">
    <location>
        <begin position="23"/>
        <end position="45"/>
    </location>
</feature>
<feature type="topological domain" description="Cytoplasmic" evidence="8">
    <location>
        <begin position="46"/>
        <end position="80"/>
    </location>
</feature>
<feature type="region of interest" description="Disordered" evidence="4">
    <location>
        <begin position="55"/>
        <end position="80"/>
    </location>
</feature>
<feature type="modified residue" description="Phosphoserine" evidence="2">
    <location>
        <position position="73"/>
    </location>
</feature>
<feature type="glycosylation site" description="O-linked (GlcNAc) threonine" evidence="9 10">
    <location>
        <position position="3"/>
    </location>
</feature>
<feature type="glycosylation site" description="O-linked (GlcNAc) threonine" evidence="9 10">
    <location>
        <position position="5"/>
    </location>
</feature>
<feature type="glycosylation site" description="O-linked (GlcNAc) threonine" evidence="9 10">
    <location>
        <position position="9"/>
    </location>
</feature>
<feature type="mutagenesis site" description="Does not affect interaction with NKA; when associated with A-5 and A-9." evidence="5">
    <original>T</original>
    <variation>A</variation>
    <location>
        <position position="3"/>
    </location>
</feature>
<feature type="mutagenesis site" description="Does not affect interaction with NKA; when associated with A-3 and A-9." evidence="5">
    <original>T</original>
    <variation>A</variation>
    <location>
        <position position="5"/>
    </location>
</feature>
<feature type="mutagenesis site" description="Does not affect interaction with NKA; when associated with A-3 and A-5." evidence="5">
    <original>T</original>
    <variation>A</variation>
    <location>
        <position position="9"/>
    </location>
</feature>
<feature type="mutagenesis site" description="Reduces the rate and degree of FXYD7 O-glycosylation. Decreases expression at the plasma membrane." evidence="6">
    <original>V</original>
    <variation>A</variation>
    <location>
        <position position="80"/>
    </location>
</feature>
<gene>
    <name type="primary">Fxyd7</name>
</gene>
<organism>
    <name type="scientific">Mus musculus</name>
    <name type="common">Mouse</name>
    <dbReference type="NCBI Taxonomy" id="10090"/>
    <lineage>
        <taxon>Eukaryota</taxon>
        <taxon>Metazoa</taxon>
        <taxon>Chordata</taxon>
        <taxon>Craniata</taxon>
        <taxon>Vertebrata</taxon>
        <taxon>Euteleostomi</taxon>
        <taxon>Mammalia</taxon>
        <taxon>Eutheria</taxon>
        <taxon>Euarchontoglires</taxon>
        <taxon>Glires</taxon>
        <taxon>Rodentia</taxon>
        <taxon>Myomorpha</taxon>
        <taxon>Muroidea</taxon>
        <taxon>Muridae</taxon>
        <taxon>Murinae</taxon>
        <taxon>Mus</taxon>
        <taxon>Mus</taxon>
    </lineage>
</organism>
<proteinExistence type="evidence at protein level"/>
<protein>
    <recommendedName>
        <fullName>FXYD domain-containing ion transport regulator 7</fullName>
    </recommendedName>
</protein>
<reference key="1">
    <citation type="journal article" date="2005" name="Science">
        <title>The transcriptional landscape of the mammalian genome.</title>
        <authorList>
            <person name="Carninci P."/>
            <person name="Kasukawa T."/>
            <person name="Katayama S."/>
            <person name="Gough J."/>
            <person name="Frith M.C."/>
            <person name="Maeda N."/>
            <person name="Oyama R."/>
            <person name="Ravasi T."/>
            <person name="Lenhard B."/>
            <person name="Wells C."/>
            <person name="Kodzius R."/>
            <person name="Shimokawa K."/>
            <person name="Bajic V.B."/>
            <person name="Brenner S.E."/>
            <person name="Batalov S."/>
            <person name="Forrest A.R."/>
            <person name="Zavolan M."/>
            <person name="Davis M.J."/>
            <person name="Wilming L.G."/>
            <person name="Aidinis V."/>
            <person name="Allen J.E."/>
            <person name="Ambesi-Impiombato A."/>
            <person name="Apweiler R."/>
            <person name="Aturaliya R.N."/>
            <person name="Bailey T.L."/>
            <person name="Bansal M."/>
            <person name="Baxter L."/>
            <person name="Beisel K.W."/>
            <person name="Bersano T."/>
            <person name="Bono H."/>
            <person name="Chalk A.M."/>
            <person name="Chiu K.P."/>
            <person name="Choudhary V."/>
            <person name="Christoffels A."/>
            <person name="Clutterbuck D.R."/>
            <person name="Crowe M.L."/>
            <person name="Dalla E."/>
            <person name="Dalrymple B.P."/>
            <person name="de Bono B."/>
            <person name="Della Gatta G."/>
            <person name="di Bernardo D."/>
            <person name="Down T."/>
            <person name="Engstrom P."/>
            <person name="Fagiolini M."/>
            <person name="Faulkner G."/>
            <person name="Fletcher C.F."/>
            <person name="Fukushima T."/>
            <person name="Furuno M."/>
            <person name="Futaki S."/>
            <person name="Gariboldi M."/>
            <person name="Georgii-Hemming P."/>
            <person name="Gingeras T.R."/>
            <person name="Gojobori T."/>
            <person name="Green R.E."/>
            <person name="Gustincich S."/>
            <person name="Harbers M."/>
            <person name="Hayashi Y."/>
            <person name="Hensch T.K."/>
            <person name="Hirokawa N."/>
            <person name="Hill D."/>
            <person name="Huminiecki L."/>
            <person name="Iacono M."/>
            <person name="Ikeo K."/>
            <person name="Iwama A."/>
            <person name="Ishikawa T."/>
            <person name="Jakt M."/>
            <person name="Kanapin A."/>
            <person name="Katoh M."/>
            <person name="Kawasawa Y."/>
            <person name="Kelso J."/>
            <person name="Kitamura H."/>
            <person name="Kitano H."/>
            <person name="Kollias G."/>
            <person name="Krishnan S.P."/>
            <person name="Kruger A."/>
            <person name="Kummerfeld S.K."/>
            <person name="Kurochkin I.V."/>
            <person name="Lareau L.F."/>
            <person name="Lazarevic D."/>
            <person name="Lipovich L."/>
            <person name="Liu J."/>
            <person name="Liuni S."/>
            <person name="McWilliam S."/>
            <person name="Madan Babu M."/>
            <person name="Madera M."/>
            <person name="Marchionni L."/>
            <person name="Matsuda H."/>
            <person name="Matsuzawa S."/>
            <person name="Miki H."/>
            <person name="Mignone F."/>
            <person name="Miyake S."/>
            <person name="Morris K."/>
            <person name="Mottagui-Tabar S."/>
            <person name="Mulder N."/>
            <person name="Nakano N."/>
            <person name="Nakauchi H."/>
            <person name="Ng P."/>
            <person name="Nilsson R."/>
            <person name="Nishiguchi S."/>
            <person name="Nishikawa S."/>
            <person name="Nori F."/>
            <person name="Ohara O."/>
            <person name="Okazaki Y."/>
            <person name="Orlando V."/>
            <person name="Pang K.C."/>
            <person name="Pavan W.J."/>
            <person name="Pavesi G."/>
            <person name="Pesole G."/>
            <person name="Petrovsky N."/>
            <person name="Piazza S."/>
            <person name="Reed J."/>
            <person name="Reid J.F."/>
            <person name="Ring B.Z."/>
            <person name="Ringwald M."/>
            <person name="Rost B."/>
            <person name="Ruan Y."/>
            <person name="Salzberg S.L."/>
            <person name="Sandelin A."/>
            <person name="Schneider C."/>
            <person name="Schoenbach C."/>
            <person name="Sekiguchi K."/>
            <person name="Semple C.A."/>
            <person name="Seno S."/>
            <person name="Sessa L."/>
            <person name="Sheng Y."/>
            <person name="Shibata Y."/>
            <person name="Shimada H."/>
            <person name="Shimada K."/>
            <person name="Silva D."/>
            <person name="Sinclair B."/>
            <person name="Sperling S."/>
            <person name="Stupka E."/>
            <person name="Sugiura K."/>
            <person name="Sultana R."/>
            <person name="Takenaka Y."/>
            <person name="Taki K."/>
            <person name="Tammoja K."/>
            <person name="Tan S.L."/>
            <person name="Tang S."/>
            <person name="Taylor M.S."/>
            <person name="Tegner J."/>
            <person name="Teichmann S.A."/>
            <person name="Ueda H.R."/>
            <person name="van Nimwegen E."/>
            <person name="Verardo R."/>
            <person name="Wei C.L."/>
            <person name="Yagi K."/>
            <person name="Yamanishi H."/>
            <person name="Zabarovsky E."/>
            <person name="Zhu S."/>
            <person name="Zimmer A."/>
            <person name="Hide W."/>
            <person name="Bult C."/>
            <person name="Grimmond S.M."/>
            <person name="Teasdale R.D."/>
            <person name="Liu E.T."/>
            <person name="Brusic V."/>
            <person name="Quackenbush J."/>
            <person name="Wahlestedt C."/>
            <person name="Mattick J.S."/>
            <person name="Hume D.A."/>
            <person name="Kai C."/>
            <person name="Sasaki D."/>
            <person name="Tomaru Y."/>
            <person name="Fukuda S."/>
            <person name="Kanamori-Katayama M."/>
            <person name="Suzuki M."/>
            <person name="Aoki J."/>
            <person name="Arakawa T."/>
            <person name="Iida J."/>
            <person name="Imamura K."/>
            <person name="Itoh M."/>
            <person name="Kato T."/>
            <person name="Kawaji H."/>
            <person name="Kawagashira N."/>
            <person name="Kawashima T."/>
            <person name="Kojima M."/>
            <person name="Kondo S."/>
            <person name="Konno H."/>
            <person name="Nakano K."/>
            <person name="Ninomiya N."/>
            <person name="Nishio T."/>
            <person name="Okada M."/>
            <person name="Plessy C."/>
            <person name="Shibata K."/>
            <person name="Shiraki T."/>
            <person name="Suzuki S."/>
            <person name="Tagami M."/>
            <person name="Waki K."/>
            <person name="Watahiki A."/>
            <person name="Okamura-Oho Y."/>
            <person name="Suzuki H."/>
            <person name="Kawai J."/>
            <person name="Hayashizaki Y."/>
        </authorList>
    </citation>
    <scope>NUCLEOTIDE SEQUENCE [LARGE SCALE MRNA]</scope>
    <source>
        <strain>C57BL/6J</strain>
    </source>
</reference>
<reference key="2">
    <citation type="journal article" date="2000" name="Genomics">
        <title>The FXYD gene family of small ion transport regulators or channels: cDNA sequence, protein signature sequence, and expression.</title>
        <authorList>
            <person name="Sweadner K.J."/>
            <person name="Rael E."/>
        </authorList>
    </citation>
    <scope>RECONSTRUCTION FROM ESTS</scope>
    <scope>CONCEPTUAL TRANSLATION</scope>
</reference>
<reference key="3">
    <citation type="journal article" date="2002" name="EMBO J.">
        <title>FXYD7 is a brain-specific regulator of Na,K-ATPase alpha 1-beta isozymes.</title>
        <authorList>
            <person name="Beguin P."/>
            <person name="Crambert G."/>
            <person name="Monnet-Tschudi F."/>
            <person name="Uldry M."/>
            <person name="Horisberger J.D."/>
            <person name="Garty H."/>
            <person name="Geering K."/>
        </authorList>
    </citation>
    <scope>FUNCTION</scope>
    <scope>SUBCELLULAR LOCATION</scope>
    <scope>SUBUNIT</scope>
    <scope>TOPOLOGY</scope>
    <scope>GLYCOSYLATION AT THR-3; THR-5 AND THR-9</scope>
    <scope>MUTAGENESIS OF THR-3; THR-5 AND THR-9</scope>
</reference>
<reference key="4">
    <citation type="journal article" date="2004" name="J. Biol. Chem.">
        <title>FXYD7, mapping of functional sites involved in endoplasmic reticulum export, association with and regulation of Na,K-ATPase.</title>
        <authorList>
            <person name="Crambert G."/>
            <person name="Li C."/>
            <person name="Swee L.K."/>
            <person name="Geering K."/>
        </authorList>
    </citation>
    <scope>FUNCTION</scope>
    <scope>SUBCELLULAR LOCATION</scope>
    <scope>SUBUNIT</scope>
    <scope>GLYCOSYLATION</scope>
    <scope>MUTAGENESIS OF VAL-80</scope>
</reference>
<reference key="5">
    <citation type="journal article" date="2005" name="J. Biol. Chem.">
        <title>Role of the transmembrane domain of FXYD7 in structural and functional interactions with Na,K-ATPase.</title>
        <authorList>
            <person name="Li C."/>
            <person name="Crambert G."/>
            <person name="Thuillard D."/>
            <person name="Roy S."/>
            <person name="Schaer D."/>
            <person name="Geering K."/>
        </authorList>
    </citation>
    <scope>FUNCTION</scope>
    <scope>SUBUNIT</scope>
    <scope>DOMAIN</scope>
</reference>
<dbReference type="EMBL" id="AK004113">
    <property type="protein sequence ID" value="BAC25067.1"/>
    <property type="molecule type" value="mRNA"/>
</dbReference>
<dbReference type="CCDS" id="CCDS21122.1"/>
<dbReference type="RefSeq" id="NP_071290.1">
    <property type="nucleotide sequence ID" value="NM_022007.1"/>
</dbReference>
<dbReference type="SMR" id="P59648"/>
<dbReference type="FunCoup" id="P59648">
    <property type="interactions" value="46"/>
</dbReference>
<dbReference type="STRING" id="10090.ENSMUSP00000073555"/>
<dbReference type="GlyGen" id="P59648">
    <property type="glycosylation" value="3 sites"/>
</dbReference>
<dbReference type="iPTMnet" id="P59648"/>
<dbReference type="PhosphoSitePlus" id="P59648"/>
<dbReference type="SwissPalm" id="P59648"/>
<dbReference type="PaxDb" id="10090-ENSMUSP00000073555"/>
<dbReference type="PeptideAtlas" id="P59648"/>
<dbReference type="ProteomicsDB" id="266896"/>
<dbReference type="DNASU" id="57780"/>
<dbReference type="Ensembl" id="ENSMUST00000073892.6">
    <property type="protein sequence ID" value="ENSMUSP00000073555.5"/>
    <property type="gene ID" value="ENSMUSG00000036578.8"/>
</dbReference>
<dbReference type="GeneID" id="57780"/>
<dbReference type="KEGG" id="mmu:57780"/>
<dbReference type="UCSC" id="uc009ghr.1">
    <property type="organism name" value="mouse"/>
</dbReference>
<dbReference type="AGR" id="MGI:1889006"/>
<dbReference type="CTD" id="53822"/>
<dbReference type="MGI" id="MGI:1889006">
    <property type="gene designation" value="Fxyd7"/>
</dbReference>
<dbReference type="VEuPathDB" id="HostDB:ENSMUSG00000036578"/>
<dbReference type="eggNOG" id="ENOG502SFZR">
    <property type="taxonomic scope" value="Eukaryota"/>
</dbReference>
<dbReference type="GeneTree" id="ENSGT00940000153062"/>
<dbReference type="HOGENOM" id="CLU_168385_1_0_1"/>
<dbReference type="InParanoid" id="P59648"/>
<dbReference type="OMA" id="GLHFPCR"/>
<dbReference type="OrthoDB" id="8961850at2759"/>
<dbReference type="PhylomeDB" id="P59648"/>
<dbReference type="TreeFam" id="TF333443"/>
<dbReference type="Reactome" id="R-MMU-5578775">
    <property type="pathway name" value="Ion homeostasis"/>
</dbReference>
<dbReference type="Reactome" id="R-MMU-936837">
    <property type="pathway name" value="Ion transport by P-type ATPases"/>
</dbReference>
<dbReference type="BioGRID-ORCS" id="57780">
    <property type="hits" value="0 hits in 77 CRISPR screens"/>
</dbReference>
<dbReference type="ChiTaRS" id="Fxyd7">
    <property type="organism name" value="mouse"/>
</dbReference>
<dbReference type="PRO" id="PR:P59648"/>
<dbReference type="Proteomes" id="UP000000589">
    <property type="component" value="Chromosome 7"/>
</dbReference>
<dbReference type="RNAct" id="P59648">
    <property type="molecule type" value="protein"/>
</dbReference>
<dbReference type="Bgee" id="ENSMUSG00000036578">
    <property type="expression patterns" value="Expressed in facial nucleus and 117 other cell types or tissues"/>
</dbReference>
<dbReference type="ExpressionAtlas" id="P59648">
    <property type="expression patterns" value="baseline and differential"/>
</dbReference>
<dbReference type="GO" id="GO:0005886">
    <property type="term" value="C:plasma membrane"/>
    <property type="evidence" value="ECO:0007669"/>
    <property type="project" value="UniProtKB-SubCell"/>
</dbReference>
<dbReference type="GO" id="GO:0051117">
    <property type="term" value="F:ATPase binding"/>
    <property type="evidence" value="ECO:0007669"/>
    <property type="project" value="Ensembl"/>
</dbReference>
<dbReference type="GO" id="GO:0099106">
    <property type="term" value="F:ion channel regulator activity"/>
    <property type="evidence" value="ECO:0007669"/>
    <property type="project" value="InterPro"/>
</dbReference>
<dbReference type="GO" id="GO:0006813">
    <property type="term" value="P:potassium ion transport"/>
    <property type="evidence" value="ECO:0007669"/>
    <property type="project" value="UniProtKB-KW"/>
</dbReference>
<dbReference type="GO" id="GO:0043269">
    <property type="term" value="P:regulation of monoatomic ion transport"/>
    <property type="evidence" value="ECO:0007669"/>
    <property type="project" value="Ensembl"/>
</dbReference>
<dbReference type="GO" id="GO:0006814">
    <property type="term" value="P:sodium ion transport"/>
    <property type="evidence" value="ECO:0007669"/>
    <property type="project" value="UniProtKB-KW"/>
</dbReference>
<dbReference type="CDD" id="cd20325">
    <property type="entry name" value="FXYD7"/>
    <property type="match status" value="1"/>
</dbReference>
<dbReference type="FunFam" id="1.20.5.780:FF:000003">
    <property type="entry name" value="FXYD domain-containing ion transport regulator"/>
    <property type="match status" value="1"/>
</dbReference>
<dbReference type="Gene3D" id="1.20.5.780">
    <property type="entry name" value="Single helix bin"/>
    <property type="match status" value="1"/>
</dbReference>
<dbReference type="InterPro" id="IPR047284">
    <property type="entry name" value="FXYD7"/>
</dbReference>
<dbReference type="InterPro" id="IPR047297">
    <property type="entry name" value="FXYD_motif"/>
</dbReference>
<dbReference type="InterPro" id="IPR000272">
    <property type="entry name" value="Ion-transport_regulator_FXYD"/>
</dbReference>
<dbReference type="PANTHER" id="PTHR14132:SF1">
    <property type="entry name" value="FXYD DOMAIN-CONTAINING ION TRANSPORT REGULATOR 7"/>
    <property type="match status" value="1"/>
</dbReference>
<dbReference type="PANTHER" id="PTHR14132">
    <property type="entry name" value="SODIUM/POTASSIUM-TRANSPORTING ATPASE SUBUNIT GAMMA"/>
    <property type="match status" value="1"/>
</dbReference>
<dbReference type="Pfam" id="PF02038">
    <property type="entry name" value="ATP1G1_PLM_MAT8"/>
    <property type="match status" value="1"/>
</dbReference>
<dbReference type="PROSITE" id="PS01310">
    <property type="entry name" value="FXYD"/>
    <property type="match status" value="1"/>
</dbReference>
<keyword id="KW-1003">Cell membrane</keyword>
<keyword id="KW-0325">Glycoprotein</keyword>
<keyword id="KW-0406">Ion transport</keyword>
<keyword id="KW-0472">Membrane</keyword>
<keyword id="KW-0597">Phosphoprotein</keyword>
<keyword id="KW-0630">Potassium</keyword>
<keyword id="KW-0633">Potassium transport</keyword>
<keyword id="KW-1185">Reference proteome</keyword>
<keyword id="KW-0915">Sodium</keyword>
<keyword id="KW-0739">Sodium transport</keyword>
<keyword id="KW-0740">Sodium/potassium transport</keyword>
<keyword id="KW-0812">Transmembrane</keyword>
<keyword id="KW-1133">Transmembrane helix</keyword>
<keyword id="KW-0813">Transport</keyword>